<reference key="1">
    <citation type="submission" date="2008-01" db="EMBL/GenBank/DDBJ databases">
        <title>Complete sequence of chromosome of Caulobacter sp. K31.</title>
        <authorList>
            <consortium name="US DOE Joint Genome Institute"/>
            <person name="Copeland A."/>
            <person name="Lucas S."/>
            <person name="Lapidus A."/>
            <person name="Barry K."/>
            <person name="Glavina del Rio T."/>
            <person name="Dalin E."/>
            <person name="Tice H."/>
            <person name="Pitluck S."/>
            <person name="Bruce D."/>
            <person name="Goodwin L."/>
            <person name="Thompson L.S."/>
            <person name="Brettin T."/>
            <person name="Detter J.C."/>
            <person name="Han C."/>
            <person name="Schmutz J."/>
            <person name="Larimer F."/>
            <person name="Land M."/>
            <person name="Hauser L."/>
            <person name="Kyrpides N."/>
            <person name="Kim E."/>
            <person name="Stephens C."/>
            <person name="Richardson P."/>
        </authorList>
    </citation>
    <scope>NUCLEOTIDE SEQUENCE [LARGE SCALE GENOMIC DNA]</scope>
    <source>
        <strain>K31</strain>
    </source>
</reference>
<keyword id="KW-0963">Cytoplasm</keyword>
<keyword id="KW-0227">DNA damage</keyword>
<keyword id="KW-0233">DNA recombination</keyword>
<keyword id="KW-0234">DNA repair</keyword>
<keyword id="KW-0238">DNA-binding</keyword>
<keyword id="KW-0255">Endonuclease</keyword>
<keyword id="KW-0378">Hydrolase</keyword>
<keyword id="KW-0460">Magnesium</keyword>
<keyword id="KW-0479">Metal-binding</keyword>
<keyword id="KW-0540">Nuclease</keyword>
<accession>B0SUN7</accession>
<feature type="chain" id="PRO_1000074480" description="Crossover junction endodeoxyribonuclease RuvC">
    <location>
        <begin position="1"/>
        <end position="169"/>
    </location>
</feature>
<feature type="active site" evidence="1">
    <location>
        <position position="15"/>
    </location>
</feature>
<feature type="active site" evidence="1">
    <location>
        <position position="75"/>
    </location>
</feature>
<feature type="active site" evidence="1">
    <location>
        <position position="147"/>
    </location>
</feature>
<feature type="binding site" evidence="1">
    <location>
        <position position="15"/>
    </location>
    <ligand>
        <name>Mg(2+)</name>
        <dbReference type="ChEBI" id="CHEBI:18420"/>
        <label>1</label>
    </ligand>
</feature>
<feature type="binding site" evidence="1">
    <location>
        <position position="75"/>
    </location>
    <ligand>
        <name>Mg(2+)</name>
        <dbReference type="ChEBI" id="CHEBI:18420"/>
        <label>2</label>
    </ligand>
</feature>
<feature type="binding site" evidence="1">
    <location>
        <position position="147"/>
    </location>
    <ligand>
        <name>Mg(2+)</name>
        <dbReference type="ChEBI" id="CHEBI:18420"/>
        <label>1</label>
    </ligand>
</feature>
<name>RUVC_CAUSK</name>
<comment type="function">
    <text evidence="1">The RuvA-RuvB-RuvC complex processes Holliday junction (HJ) DNA during genetic recombination and DNA repair. Endonuclease that resolves HJ intermediates. Cleaves cruciform DNA by making single-stranded nicks across the HJ at symmetrical positions within the homologous arms, yielding a 5'-phosphate and a 3'-hydroxyl group; requires a central core of homology in the junction. The consensus cleavage sequence is 5'-(A/T)TT(C/G)-3'. Cleavage occurs on the 3'-side of the TT dinucleotide at the point of strand exchange. HJ branch migration catalyzed by RuvA-RuvB allows RuvC to scan DNA until it finds its consensus sequence, where it cleaves and resolves the cruciform DNA.</text>
</comment>
<comment type="catalytic activity">
    <reaction evidence="1">
        <text>Endonucleolytic cleavage at a junction such as a reciprocal single-stranded crossover between two homologous DNA duplexes (Holliday junction).</text>
        <dbReference type="EC" id="3.1.21.10"/>
    </reaction>
</comment>
<comment type="cofactor">
    <cofactor evidence="1">
        <name>Mg(2+)</name>
        <dbReference type="ChEBI" id="CHEBI:18420"/>
    </cofactor>
    <text evidence="1">Binds 2 Mg(2+) ion per subunit.</text>
</comment>
<comment type="subunit">
    <text evidence="1">Homodimer which binds Holliday junction (HJ) DNA. The HJ becomes 2-fold symmetrical on binding to RuvC with unstacked arms; it has a different conformation from HJ DNA in complex with RuvA. In the full resolvosome a probable DNA-RuvA(4)-RuvB(12)-RuvC(2) complex forms which resolves the HJ.</text>
</comment>
<comment type="subcellular location">
    <subcellularLocation>
        <location evidence="1">Cytoplasm</location>
    </subcellularLocation>
</comment>
<comment type="similarity">
    <text evidence="1">Belongs to the RuvC family.</text>
</comment>
<sequence>MMNANRIPIRILGLDPGLRRTGWGVVSVEGSRMSHVAHGVIVPDEKGEFASRLLCLFEGICAVIDAHRPDEAAVEEVFLNTNAQSTLKLGHARAAALIAPARAGLLVAEYSTRLVKKAVVGTGAADKAQIGFMIARLLPTAGKTTADCADALAVAITHANLRIANRRVA</sequence>
<gene>
    <name evidence="1" type="primary">ruvC</name>
    <name type="ordered locus">Caul_0784</name>
</gene>
<organism>
    <name type="scientific">Caulobacter sp. (strain K31)</name>
    <dbReference type="NCBI Taxonomy" id="366602"/>
    <lineage>
        <taxon>Bacteria</taxon>
        <taxon>Pseudomonadati</taxon>
        <taxon>Pseudomonadota</taxon>
        <taxon>Alphaproteobacteria</taxon>
        <taxon>Caulobacterales</taxon>
        <taxon>Caulobacteraceae</taxon>
        <taxon>Caulobacter</taxon>
    </lineage>
</organism>
<proteinExistence type="inferred from homology"/>
<dbReference type="EC" id="3.1.21.10" evidence="1"/>
<dbReference type="EMBL" id="CP000927">
    <property type="protein sequence ID" value="ABZ69915.1"/>
    <property type="molecule type" value="Genomic_DNA"/>
</dbReference>
<dbReference type="SMR" id="B0SUN7"/>
<dbReference type="STRING" id="366602.Caul_0784"/>
<dbReference type="KEGG" id="cak:Caul_0784"/>
<dbReference type="eggNOG" id="COG0817">
    <property type="taxonomic scope" value="Bacteria"/>
</dbReference>
<dbReference type="HOGENOM" id="CLU_091257_1_0_5"/>
<dbReference type="OrthoDB" id="9805499at2"/>
<dbReference type="GO" id="GO:0005737">
    <property type="term" value="C:cytoplasm"/>
    <property type="evidence" value="ECO:0007669"/>
    <property type="project" value="UniProtKB-SubCell"/>
</dbReference>
<dbReference type="GO" id="GO:0048476">
    <property type="term" value="C:Holliday junction resolvase complex"/>
    <property type="evidence" value="ECO:0007669"/>
    <property type="project" value="UniProtKB-UniRule"/>
</dbReference>
<dbReference type="GO" id="GO:0008821">
    <property type="term" value="F:crossover junction DNA endonuclease activity"/>
    <property type="evidence" value="ECO:0007669"/>
    <property type="project" value="UniProtKB-UniRule"/>
</dbReference>
<dbReference type="GO" id="GO:0003677">
    <property type="term" value="F:DNA binding"/>
    <property type="evidence" value="ECO:0007669"/>
    <property type="project" value="UniProtKB-KW"/>
</dbReference>
<dbReference type="GO" id="GO:0000287">
    <property type="term" value="F:magnesium ion binding"/>
    <property type="evidence" value="ECO:0007669"/>
    <property type="project" value="UniProtKB-UniRule"/>
</dbReference>
<dbReference type="GO" id="GO:0006310">
    <property type="term" value="P:DNA recombination"/>
    <property type="evidence" value="ECO:0007669"/>
    <property type="project" value="UniProtKB-UniRule"/>
</dbReference>
<dbReference type="GO" id="GO:0006281">
    <property type="term" value="P:DNA repair"/>
    <property type="evidence" value="ECO:0007669"/>
    <property type="project" value="UniProtKB-UniRule"/>
</dbReference>
<dbReference type="CDD" id="cd16962">
    <property type="entry name" value="RuvC"/>
    <property type="match status" value="1"/>
</dbReference>
<dbReference type="FunFam" id="3.30.420.10:FF:000002">
    <property type="entry name" value="Crossover junction endodeoxyribonuclease RuvC"/>
    <property type="match status" value="1"/>
</dbReference>
<dbReference type="Gene3D" id="3.30.420.10">
    <property type="entry name" value="Ribonuclease H-like superfamily/Ribonuclease H"/>
    <property type="match status" value="1"/>
</dbReference>
<dbReference type="HAMAP" id="MF_00034">
    <property type="entry name" value="RuvC"/>
    <property type="match status" value="1"/>
</dbReference>
<dbReference type="InterPro" id="IPR012337">
    <property type="entry name" value="RNaseH-like_sf"/>
</dbReference>
<dbReference type="InterPro" id="IPR036397">
    <property type="entry name" value="RNaseH_sf"/>
</dbReference>
<dbReference type="InterPro" id="IPR020563">
    <property type="entry name" value="X-over_junc_endoDNase_Mg_BS"/>
</dbReference>
<dbReference type="InterPro" id="IPR002176">
    <property type="entry name" value="X-over_junc_endoDNase_RuvC"/>
</dbReference>
<dbReference type="NCBIfam" id="TIGR00228">
    <property type="entry name" value="ruvC"/>
    <property type="match status" value="1"/>
</dbReference>
<dbReference type="PANTHER" id="PTHR30194">
    <property type="entry name" value="CROSSOVER JUNCTION ENDODEOXYRIBONUCLEASE RUVC"/>
    <property type="match status" value="1"/>
</dbReference>
<dbReference type="PANTHER" id="PTHR30194:SF3">
    <property type="entry name" value="CROSSOVER JUNCTION ENDODEOXYRIBONUCLEASE RUVC"/>
    <property type="match status" value="1"/>
</dbReference>
<dbReference type="Pfam" id="PF02075">
    <property type="entry name" value="RuvC"/>
    <property type="match status" value="1"/>
</dbReference>
<dbReference type="PRINTS" id="PR00696">
    <property type="entry name" value="RSOLVASERUVC"/>
</dbReference>
<dbReference type="SUPFAM" id="SSF53098">
    <property type="entry name" value="Ribonuclease H-like"/>
    <property type="match status" value="1"/>
</dbReference>
<dbReference type="PROSITE" id="PS01321">
    <property type="entry name" value="RUVC"/>
    <property type="match status" value="1"/>
</dbReference>
<protein>
    <recommendedName>
        <fullName evidence="1">Crossover junction endodeoxyribonuclease RuvC</fullName>
        <ecNumber evidence="1">3.1.21.10</ecNumber>
    </recommendedName>
    <alternativeName>
        <fullName evidence="1">Holliday junction nuclease RuvC</fullName>
    </alternativeName>
    <alternativeName>
        <fullName evidence="1">Holliday junction resolvase RuvC</fullName>
    </alternativeName>
</protein>
<evidence type="ECO:0000255" key="1">
    <source>
        <dbReference type="HAMAP-Rule" id="MF_00034"/>
    </source>
</evidence>